<organism>
    <name type="scientific">Wolbachia pipientis wMel</name>
    <dbReference type="NCBI Taxonomy" id="163164"/>
    <lineage>
        <taxon>Bacteria</taxon>
        <taxon>Pseudomonadati</taxon>
        <taxon>Pseudomonadota</taxon>
        <taxon>Alphaproteobacteria</taxon>
        <taxon>Rickettsiales</taxon>
        <taxon>Anaplasmataceae</taxon>
        <taxon>Wolbachieae</taxon>
        <taxon>Wolbachia</taxon>
    </lineage>
</organism>
<proteinExistence type="inferred from homology"/>
<reference key="1">
    <citation type="journal article" date="2004" name="PLoS Biol.">
        <title>Phylogenomics of the reproductive parasite Wolbachia pipientis wMel: a streamlined genome overrun by mobile genetic elements.</title>
        <authorList>
            <person name="Wu M."/>
            <person name="Sun L.V."/>
            <person name="Vamathevan J.J."/>
            <person name="Riegler M."/>
            <person name="DeBoy R.T."/>
            <person name="Brownlie J.C."/>
            <person name="McGraw E.A."/>
            <person name="Martin W."/>
            <person name="Esser C."/>
            <person name="Ahmadinejad N."/>
            <person name="Wiegand C."/>
            <person name="Madupu R."/>
            <person name="Beanan M.J."/>
            <person name="Brinkac L.M."/>
            <person name="Daugherty S.C."/>
            <person name="Durkin A.S."/>
            <person name="Kolonay J.F."/>
            <person name="Nelson W.C."/>
            <person name="Mohamoud Y."/>
            <person name="Lee P."/>
            <person name="Berry K.J."/>
            <person name="Young M.B."/>
            <person name="Utterback T.R."/>
            <person name="Weidman J.F."/>
            <person name="Nierman W.C."/>
            <person name="Paulsen I.T."/>
            <person name="Nelson K.E."/>
            <person name="Tettelin H."/>
            <person name="O'Neill S.L."/>
            <person name="Eisen J.A."/>
        </authorList>
    </citation>
    <scope>NUCLEOTIDE SEQUENCE [LARGE SCALE GENOMIC DNA]</scope>
</reference>
<accession>Q73H91</accession>
<keyword id="KW-0687">Ribonucleoprotein</keyword>
<keyword id="KW-0689">Ribosomal protein</keyword>
<keyword id="KW-0694">RNA-binding</keyword>
<keyword id="KW-0699">rRNA-binding</keyword>
<feature type="chain" id="PRO_0000125263" description="Large ribosomal subunit protein uL22">
    <location>
        <begin position="1"/>
        <end position="115"/>
    </location>
</feature>
<name>RL22_WOLPM</name>
<protein>
    <recommendedName>
        <fullName evidence="2">Large ribosomal subunit protein uL22</fullName>
    </recommendedName>
    <alternativeName>
        <fullName>50S ribosomal protein L22</fullName>
    </alternativeName>
</protein>
<gene>
    <name type="primary">rplV</name>
    <name type="ordered locus">WD_0676</name>
</gene>
<comment type="function">
    <text evidence="1">This protein binds specifically to 23S rRNA; its binding is stimulated by other ribosomal proteins, e.g. L4, L17, and L20. It is important during the early stages of 50S assembly. It makes multiple contacts with different domains of the 23S rRNA in the assembled 50S subunit and ribosome (By similarity).</text>
</comment>
<comment type="function">
    <text evidence="1">The globular domain of the protein is located near the polypeptide exit tunnel on the outside of the subunit, while an extended beta-hairpin is found that lines the wall of the exit tunnel in the center of the 70S ribosome.</text>
</comment>
<comment type="subunit">
    <text evidence="1">Part of the 50S ribosomal subunit.</text>
</comment>
<comment type="similarity">
    <text evidence="2">Belongs to the universal ribosomal protein uL22 family.</text>
</comment>
<evidence type="ECO:0000250" key="1"/>
<evidence type="ECO:0000305" key="2"/>
<sequence length="115" mass="12810">MKNRDVIVKAGSRVLKSTPRKLNLVAGLVRNKKVSFATVQLRFCEKKAAGLIRKVLNSAIANAQNYGLDIDNLYIKEILIGKSLTLRRVCPKAMGRANRVSKRYSNITVKLGEII</sequence>
<dbReference type="EMBL" id="AE017196">
    <property type="protein sequence ID" value="AAS14374.1"/>
    <property type="molecule type" value="Genomic_DNA"/>
</dbReference>
<dbReference type="RefSeq" id="WP_007549821.1">
    <property type="nucleotide sequence ID" value="NZ_OX384529.1"/>
</dbReference>
<dbReference type="SMR" id="Q73H91"/>
<dbReference type="EnsemblBacteria" id="AAS14374">
    <property type="protein sequence ID" value="AAS14374"/>
    <property type="gene ID" value="WD_0676"/>
</dbReference>
<dbReference type="GeneID" id="70036159"/>
<dbReference type="KEGG" id="wol:WD_0676"/>
<dbReference type="eggNOG" id="COG0091">
    <property type="taxonomic scope" value="Bacteria"/>
</dbReference>
<dbReference type="Proteomes" id="UP000008215">
    <property type="component" value="Chromosome"/>
</dbReference>
<dbReference type="GO" id="GO:0022625">
    <property type="term" value="C:cytosolic large ribosomal subunit"/>
    <property type="evidence" value="ECO:0007669"/>
    <property type="project" value="TreeGrafter"/>
</dbReference>
<dbReference type="GO" id="GO:0019843">
    <property type="term" value="F:rRNA binding"/>
    <property type="evidence" value="ECO:0007669"/>
    <property type="project" value="UniProtKB-UniRule"/>
</dbReference>
<dbReference type="GO" id="GO:0003735">
    <property type="term" value="F:structural constituent of ribosome"/>
    <property type="evidence" value="ECO:0007669"/>
    <property type="project" value="InterPro"/>
</dbReference>
<dbReference type="GO" id="GO:0006412">
    <property type="term" value="P:translation"/>
    <property type="evidence" value="ECO:0007669"/>
    <property type="project" value="UniProtKB-UniRule"/>
</dbReference>
<dbReference type="CDD" id="cd00336">
    <property type="entry name" value="Ribosomal_L22"/>
    <property type="match status" value="1"/>
</dbReference>
<dbReference type="Gene3D" id="3.90.470.10">
    <property type="entry name" value="Ribosomal protein L22/L17"/>
    <property type="match status" value="1"/>
</dbReference>
<dbReference type="HAMAP" id="MF_01331_B">
    <property type="entry name" value="Ribosomal_uL22_B"/>
    <property type="match status" value="1"/>
</dbReference>
<dbReference type="InterPro" id="IPR001063">
    <property type="entry name" value="Ribosomal_uL22"/>
</dbReference>
<dbReference type="InterPro" id="IPR005727">
    <property type="entry name" value="Ribosomal_uL22_bac/chlpt-type"/>
</dbReference>
<dbReference type="InterPro" id="IPR047867">
    <property type="entry name" value="Ribosomal_uL22_bac/org-type"/>
</dbReference>
<dbReference type="InterPro" id="IPR036394">
    <property type="entry name" value="Ribosomal_uL22_sf"/>
</dbReference>
<dbReference type="NCBIfam" id="TIGR01044">
    <property type="entry name" value="rplV_bact"/>
    <property type="match status" value="1"/>
</dbReference>
<dbReference type="PANTHER" id="PTHR13501">
    <property type="entry name" value="CHLOROPLAST 50S RIBOSOMAL PROTEIN L22-RELATED"/>
    <property type="match status" value="1"/>
</dbReference>
<dbReference type="PANTHER" id="PTHR13501:SF8">
    <property type="entry name" value="LARGE RIBOSOMAL SUBUNIT PROTEIN UL22M"/>
    <property type="match status" value="1"/>
</dbReference>
<dbReference type="Pfam" id="PF00237">
    <property type="entry name" value="Ribosomal_L22"/>
    <property type="match status" value="1"/>
</dbReference>
<dbReference type="SUPFAM" id="SSF54843">
    <property type="entry name" value="Ribosomal protein L22"/>
    <property type="match status" value="1"/>
</dbReference>